<organism>
    <name type="scientific">Rhizobium johnstonii (strain DSM 114642 / LMG 32736 / 3841)</name>
    <name type="common">Rhizobium leguminosarum bv. viciae</name>
    <dbReference type="NCBI Taxonomy" id="216596"/>
    <lineage>
        <taxon>Bacteria</taxon>
        <taxon>Pseudomonadati</taxon>
        <taxon>Pseudomonadota</taxon>
        <taxon>Alphaproteobacteria</taxon>
        <taxon>Hyphomicrobiales</taxon>
        <taxon>Rhizobiaceae</taxon>
        <taxon>Rhizobium/Agrobacterium group</taxon>
        <taxon>Rhizobium</taxon>
        <taxon>Rhizobium johnstonii</taxon>
    </lineage>
</organism>
<evidence type="ECO:0000255" key="1">
    <source>
        <dbReference type="HAMAP-Rule" id="MF_00225"/>
    </source>
</evidence>
<sequence>MIDPFKRLARKGLFLFDPETAHGMSIAALKSGLVPACQLTPDPRLRQTVAGLTFENPLGMAAGYDKNAEVPEALLKLGFGFTEIGTVTPKPQSGNPRPRIFRLVEDEGVINRLGFNNEGHDAAFGRLAALRGGGMIGVNIGANKDSEDRIADYVAGIRRFYSVARYFTANISSPNTPGLRDLQGRESLAVLLSAVLAARDEMGAASGRKIPVFLKIAPDLTEEGMDDIAAEALSHALDGLIVSNTTLSRDGLKDQRQAKETGGLSGVPLFEKSTAVLARMRKRVGPDLPIIGVGGVSSAETALEKIRAGADLVQLYSCMVYEGPGLAGDVVRGLSKLLDREKAASIRELRDTRVDYWAARKV</sequence>
<name>PYRD_RHIJ3</name>
<dbReference type="EC" id="1.3.5.2" evidence="1"/>
<dbReference type="EMBL" id="AM236080">
    <property type="protein sequence ID" value="CAK06065.1"/>
    <property type="molecule type" value="Genomic_DNA"/>
</dbReference>
<dbReference type="RefSeq" id="WP_011650358.1">
    <property type="nucleotide sequence ID" value="NC_008380.1"/>
</dbReference>
<dbReference type="SMR" id="Q1MLT8"/>
<dbReference type="EnsemblBacteria" id="CAK06065">
    <property type="protein sequence ID" value="CAK06065"/>
    <property type="gene ID" value="RL0572"/>
</dbReference>
<dbReference type="KEGG" id="rle:RL0572"/>
<dbReference type="eggNOG" id="COG0167">
    <property type="taxonomic scope" value="Bacteria"/>
</dbReference>
<dbReference type="HOGENOM" id="CLU_013640_2_1_5"/>
<dbReference type="UniPathway" id="UPA00070">
    <property type="reaction ID" value="UER00946"/>
</dbReference>
<dbReference type="Proteomes" id="UP000006575">
    <property type="component" value="Chromosome"/>
</dbReference>
<dbReference type="GO" id="GO:0005737">
    <property type="term" value="C:cytoplasm"/>
    <property type="evidence" value="ECO:0007669"/>
    <property type="project" value="InterPro"/>
</dbReference>
<dbReference type="GO" id="GO:0005886">
    <property type="term" value="C:plasma membrane"/>
    <property type="evidence" value="ECO:0007669"/>
    <property type="project" value="UniProtKB-SubCell"/>
</dbReference>
<dbReference type="GO" id="GO:0106430">
    <property type="term" value="F:dihydroorotate dehydrogenase (quinone) activity"/>
    <property type="evidence" value="ECO:0007669"/>
    <property type="project" value="UniProtKB-EC"/>
</dbReference>
<dbReference type="GO" id="GO:0006207">
    <property type="term" value="P:'de novo' pyrimidine nucleobase biosynthetic process"/>
    <property type="evidence" value="ECO:0007669"/>
    <property type="project" value="InterPro"/>
</dbReference>
<dbReference type="GO" id="GO:0044205">
    <property type="term" value="P:'de novo' UMP biosynthetic process"/>
    <property type="evidence" value="ECO:0007669"/>
    <property type="project" value="UniProtKB-UniRule"/>
</dbReference>
<dbReference type="CDD" id="cd04738">
    <property type="entry name" value="DHOD_2_like"/>
    <property type="match status" value="1"/>
</dbReference>
<dbReference type="Gene3D" id="3.20.20.70">
    <property type="entry name" value="Aldolase class I"/>
    <property type="match status" value="1"/>
</dbReference>
<dbReference type="HAMAP" id="MF_00225">
    <property type="entry name" value="DHO_dh_type2"/>
    <property type="match status" value="1"/>
</dbReference>
<dbReference type="InterPro" id="IPR013785">
    <property type="entry name" value="Aldolase_TIM"/>
</dbReference>
<dbReference type="InterPro" id="IPR050074">
    <property type="entry name" value="DHO_dehydrogenase"/>
</dbReference>
<dbReference type="InterPro" id="IPR005719">
    <property type="entry name" value="Dihydroorotate_DH_2"/>
</dbReference>
<dbReference type="InterPro" id="IPR005720">
    <property type="entry name" value="Dihydroorotate_DH_cat"/>
</dbReference>
<dbReference type="InterPro" id="IPR001295">
    <property type="entry name" value="Dihydroorotate_DH_CS"/>
</dbReference>
<dbReference type="NCBIfam" id="NF003645">
    <property type="entry name" value="PRK05286.1-2"/>
    <property type="match status" value="1"/>
</dbReference>
<dbReference type="NCBIfam" id="NF003652">
    <property type="entry name" value="PRK05286.2-5"/>
    <property type="match status" value="1"/>
</dbReference>
<dbReference type="NCBIfam" id="TIGR01036">
    <property type="entry name" value="pyrD_sub2"/>
    <property type="match status" value="1"/>
</dbReference>
<dbReference type="PANTHER" id="PTHR48109:SF4">
    <property type="entry name" value="DIHYDROOROTATE DEHYDROGENASE (QUINONE), MITOCHONDRIAL"/>
    <property type="match status" value="1"/>
</dbReference>
<dbReference type="PANTHER" id="PTHR48109">
    <property type="entry name" value="DIHYDROOROTATE DEHYDROGENASE (QUINONE), MITOCHONDRIAL-RELATED"/>
    <property type="match status" value="1"/>
</dbReference>
<dbReference type="Pfam" id="PF01180">
    <property type="entry name" value="DHO_dh"/>
    <property type="match status" value="1"/>
</dbReference>
<dbReference type="SUPFAM" id="SSF51395">
    <property type="entry name" value="FMN-linked oxidoreductases"/>
    <property type="match status" value="1"/>
</dbReference>
<dbReference type="PROSITE" id="PS00911">
    <property type="entry name" value="DHODEHASE_1"/>
    <property type="match status" value="1"/>
</dbReference>
<dbReference type="PROSITE" id="PS00912">
    <property type="entry name" value="DHODEHASE_2"/>
    <property type="match status" value="1"/>
</dbReference>
<reference key="1">
    <citation type="journal article" date="2006" name="Genome Biol.">
        <title>The genome of Rhizobium leguminosarum has recognizable core and accessory components.</title>
        <authorList>
            <person name="Young J.P.W."/>
            <person name="Crossman L.C."/>
            <person name="Johnston A.W.B."/>
            <person name="Thomson N.R."/>
            <person name="Ghazoui Z.F."/>
            <person name="Hull K.H."/>
            <person name="Wexler M."/>
            <person name="Curson A.R.J."/>
            <person name="Todd J.D."/>
            <person name="Poole P.S."/>
            <person name="Mauchline T.H."/>
            <person name="East A.K."/>
            <person name="Quail M.A."/>
            <person name="Churcher C."/>
            <person name="Arrowsmith C."/>
            <person name="Cherevach I."/>
            <person name="Chillingworth T."/>
            <person name="Clarke K."/>
            <person name="Cronin A."/>
            <person name="Davis P."/>
            <person name="Fraser A."/>
            <person name="Hance Z."/>
            <person name="Hauser H."/>
            <person name="Jagels K."/>
            <person name="Moule S."/>
            <person name="Mungall K."/>
            <person name="Norbertczak H."/>
            <person name="Rabbinowitsch E."/>
            <person name="Sanders M."/>
            <person name="Simmonds M."/>
            <person name="Whitehead S."/>
            <person name="Parkhill J."/>
        </authorList>
    </citation>
    <scope>NUCLEOTIDE SEQUENCE [LARGE SCALE GENOMIC DNA]</scope>
    <source>
        <strain>DSM 114642 / LMG 32736 / 3841</strain>
    </source>
</reference>
<proteinExistence type="inferred from homology"/>
<protein>
    <recommendedName>
        <fullName evidence="1">Dihydroorotate dehydrogenase (quinone)</fullName>
        <ecNumber evidence="1">1.3.5.2</ecNumber>
    </recommendedName>
    <alternativeName>
        <fullName evidence="1">DHOdehase</fullName>
        <shortName evidence="1">DHOD</shortName>
        <shortName evidence="1">DHODase</shortName>
    </alternativeName>
    <alternativeName>
        <fullName evidence="1">Dihydroorotate oxidase</fullName>
    </alternativeName>
</protein>
<accession>Q1MLT8</accession>
<comment type="function">
    <text evidence="1">Catalyzes the conversion of dihydroorotate to orotate with quinone as electron acceptor.</text>
</comment>
<comment type="catalytic activity">
    <reaction evidence="1">
        <text>(S)-dihydroorotate + a quinone = orotate + a quinol</text>
        <dbReference type="Rhea" id="RHEA:30187"/>
        <dbReference type="ChEBI" id="CHEBI:24646"/>
        <dbReference type="ChEBI" id="CHEBI:30839"/>
        <dbReference type="ChEBI" id="CHEBI:30864"/>
        <dbReference type="ChEBI" id="CHEBI:132124"/>
        <dbReference type="EC" id="1.3.5.2"/>
    </reaction>
</comment>
<comment type="cofactor">
    <cofactor evidence="1">
        <name>FMN</name>
        <dbReference type="ChEBI" id="CHEBI:58210"/>
    </cofactor>
    <text evidence="1">Binds 1 FMN per subunit.</text>
</comment>
<comment type="pathway">
    <text evidence="1">Pyrimidine metabolism; UMP biosynthesis via de novo pathway; orotate from (S)-dihydroorotate (quinone route): step 1/1.</text>
</comment>
<comment type="subunit">
    <text evidence="1">Monomer.</text>
</comment>
<comment type="subcellular location">
    <subcellularLocation>
        <location evidence="1">Cell membrane</location>
        <topology evidence="1">Peripheral membrane protein</topology>
    </subcellularLocation>
</comment>
<comment type="similarity">
    <text evidence="1">Belongs to the dihydroorotate dehydrogenase family. Type 2 subfamily.</text>
</comment>
<gene>
    <name evidence="1" type="primary">pyrD</name>
    <name type="ordered locus">RL0572</name>
</gene>
<keyword id="KW-1003">Cell membrane</keyword>
<keyword id="KW-0285">Flavoprotein</keyword>
<keyword id="KW-0288">FMN</keyword>
<keyword id="KW-0472">Membrane</keyword>
<keyword id="KW-0560">Oxidoreductase</keyword>
<keyword id="KW-0665">Pyrimidine biosynthesis</keyword>
<feature type="chain" id="PRO_1000024213" description="Dihydroorotate dehydrogenase (quinone)">
    <location>
        <begin position="1"/>
        <end position="362"/>
    </location>
</feature>
<feature type="active site" description="Nucleophile" evidence="1">
    <location>
        <position position="173"/>
    </location>
</feature>
<feature type="binding site" evidence="1">
    <location>
        <begin position="62"/>
        <end position="66"/>
    </location>
    <ligand>
        <name>FMN</name>
        <dbReference type="ChEBI" id="CHEBI:58210"/>
    </ligand>
</feature>
<feature type="binding site" evidence="1">
    <location>
        <position position="66"/>
    </location>
    <ligand>
        <name>substrate</name>
    </ligand>
</feature>
<feature type="binding site" evidence="1">
    <location>
        <position position="86"/>
    </location>
    <ligand>
        <name>FMN</name>
        <dbReference type="ChEBI" id="CHEBI:58210"/>
    </ligand>
</feature>
<feature type="binding site" evidence="1">
    <location>
        <begin position="111"/>
        <end position="115"/>
    </location>
    <ligand>
        <name>substrate</name>
    </ligand>
</feature>
<feature type="binding site" evidence="1">
    <location>
        <position position="139"/>
    </location>
    <ligand>
        <name>FMN</name>
        <dbReference type="ChEBI" id="CHEBI:58210"/>
    </ligand>
</feature>
<feature type="binding site" evidence="1">
    <location>
        <position position="170"/>
    </location>
    <ligand>
        <name>FMN</name>
        <dbReference type="ChEBI" id="CHEBI:58210"/>
    </ligand>
</feature>
<feature type="binding site" evidence="1">
    <location>
        <position position="170"/>
    </location>
    <ligand>
        <name>substrate</name>
    </ligand>
</feature>
<feature type="binding site" evidence="1">
    <location>
        <position position="175"/>
    </location>
    <ligand>
        <name>substrate</name>
    </ligand>
</feature>
<feature type="binding site" evidence="1">
    <location>
        <position position="215"/>
    </location>
    <ligand>
        <name>FMN</name>
        <dbReference type="ChEBI" id="CHEBI:58210"/>
    </ligand>
</feature>
<feature type="binding site" evidence="1">
    <location>
        <position position="243"/>
    </location>
    <ligand>
        <name>FMN</name>
        <dbReference type="ChEBI" id="CHEBI:58210"/>
    </ligand>
</feature>
<feature type="binding site" evidence="1">
    <location>
        <begin position="244"/>
        <end position="245"/>
    </location>
    <ligand>
        <name>substrate</name>
    </ligand>
</feature>
<feature type="binding site" evidence="1">
    <location>
        <position position="266"/>
    </location>
    <ligand>
        <name>FMN</name>
        <dbReference type="ChEBI" id="CHEBI:58210"/>
    </ligand>
</feature>
<feature type="binding site" evidence="1">
    <location>
        <position position="295"/>
    </location>
    <ligand>
        <name>FMN</name>
        <dbReference type="ChEBI" id="CHEBI:58210"/>
    </ligand>
</feature>
<feature type="binding site" evidence="1">
    <location>
        <begin position="316"/>
        <end position="317"/>
    </location>
    <ligand>
        <name>FMN</name>
        <dbReference type="ChEBI" id="CHEBI:58210"/>
    </ligand>
</feature>